<accession>P75043</accession>
<name>SSRP_MYCPN</name>
<dbReference type="EMBL" id="U00089">
    <property type="protein sequence ID" value="AAB95729.1"/>
    <property type="molecule type" value="Genomic_DNA"/>
</dbReference>
<dbReference type="PIR" id="S73407">
    <property type="entry name" value="S73407"/>
</dbReference>
<dbReference type="RefSeq" id="NP_109762.1">
    <property type="nucleotide sequence ID" value="NC_000912.1"/>
</dbReference>
<dbReference type="RefSeq" id="WP_010874431.1">
    <property type="nucleotide sequence ID" value="NZ_OU342337.1"/>
</dbReference>
<dbReference type="SMR" id="P75043"/>
<dbReference type="STRING" id="272634.MPN_074"/>
<dbReference type="EnsemblBacteria" id="AAB95729">
    <property type="protein sequence ID" value="AAB95729"/>
    <property type="gene ID" value="MPN_074"/>
</dbReference>
<dbReference type="GeneID" id="69060173"/>
<dbReference type="KEGG" id="mpn:MPN_074"/>
<dbReference type="PATRIC" id="fig|272634.6.peg.75"/>
<dbReference type="HOGENOM" id="CLU_108953_0_1_14"/>
<dbReference type="OrthoDB" id="9805462at2"/>
<dbReference type="BioCyc" id="MPNE272634:G1GJ3-112-MONOMER"/>
<dbReference type="Proteomes" id="UP000000808">
    <property type="component" value="Chromosome"/>
</dbReference>
<dbReference type="GO" id="GO:0005829">
    <property type="term" value="C:cytosol"/>
    <property type="evidence" value="ECO:0007669"/>
    <property type="project" value="TreeGrafter"/>
</dbReference>
<dbReference type="GO" id="GO:0003723">
    <property type="term" value="F:RNA binding"/>
    <property type="evidence" value="ECO:0007669"/>
    <property type="project" value="UniProtKB-UniRule"/>
</dbReference>
<dbReference type="GO" id="GO:0070929">
    <property type="term" value="P:trans-translation"/>
    <property type="evidence" value="ECO:0007669"/>
    <property type="project" value="UniProtKB-UniRule"/>
</dbReference>
<dbReference type="CDD" id="cd09294">
    <property type="entry name" value="SmpB"/>
    <property type="match status" value="1"/>
</dbReference>
<dbReference type="Gene3D" id="2.40.280.10">
    <property type="match status" value="1"/>
</dbReference>
<dbReference type="HAMAP" id="MF_00023">
    <property type="entry name" value="SmpB"/>
    <property type="match status" value="1"/>
</dbReference>
<dbReference type="InterPro" id="IPR023620">
    <property type="entry name" value="SmpB"/>
</dbReference>
<dbReference type="InterPro" id="IPR000037">
    <property type="entry name" value="SsrA-bd_prot"/>
</dbReference>
<dbReference type="InterPro" id="IPR020081">
    <property type="entry name" value="SsrA-bd_prot_CS"/>
</dbReference>
<dbReference type="NCBIfam" id="NF003843">
    <property type="entry name" value="PRK05422.1"/>
    <property type="match status" value="1"/>
</dbReference>
<dbReference type="NCBIfam" id="TIGR00086">
    <property type="entry name" value="smpB"/>
    <property type="match status" value="1"/>
</dbReference>
<dbReference type="PANTHER" id="PTHR30308:SF2">
    <property type="entry name" value="SSRA-BINDING PROTEIN"/>
    <property type="match status" value="1"/>
</dbReference>
<dbReference type="PANTHER" id="PTHR30308">
    <property type="entry name" value="TMRNA-BINDING COMPONENT OF TRANS-TRANSLATION TAGGING COMPLEX"/>
    <property type="match status" value="1"/>
</dbReference>
<dbReference type="Pfam" id="PF01668">
    <property type="entry name" value="SmpB"/>
    <property type="match status" value="1"/>
</dbReference>
<dbReference type="SUPFAM" id="SSF74982">
    <property type="entry name" value="Small protein B (SmpB)"/>
    <property type="match status" value="1"/>
</dbReference>
<dbReference type="PROSITE" id="PS01317">
    <property type="entry name" value="SSRP"/>
    <property type="match status" value="1"/>
</dbReference>
<keyword id="KW-0963">Cytoplasm</keyword>
<keyword id="KW-1185">Reference proteome</keyword>
<keyword id="KW-0694">RNA-binding</keyword>
<gene>
    <name evidence="1" type="primary">smpB</name>
    <name type="ordered locus">MPN_074</name>
    <name type="ORF">MP081</name>
</gene>
<protein>
    <recommendedName>
        <fullName evidence="1">SsrA-binding protein</fullName>
    </recommendedName>
    <alternativeName>
        <fullName evidence="1">Small protein B</fullName>
    </alternativeName>
</protein>
<comment type="function">
    <text evidence="1">Required for rescue of stalled ribosomes mediated by trans-translation. Binds to transfer-messenger RNA (tmRNA), required for stable association of tmRNA with ribosomes. tmRNA and SmpB together mimic tRNA shape, replacing the anticodon stem-loop with SmpB. tmRNA is encoded by the ssrA gene; the 2 termini fold to resemble tRNA(Ala) and it encodes a 'tag peptide', a short internal open reading frame. During trans-translation Ala-aminoacylated tmRNA acts like a tRNA, entering the A-site of stalled ribosomes, displacing the stalled mRNA. The ribosome then switches to translate the ORF on the tmRNA; the nascent peptide is terminated with the 'tag peptide' encoded by the tmRNA and targeted for degradation. The ribosome is freed to recommence translation, which seems to be the essential function of trans-translation.</text>
</comment>
<comment type="subcellular location">
    <subcellularLocation>
        <location evidence="1">Cytoplasm</location>
    </subcellularLocation>
    <text evidence="1">The tmRNA-SmpB complex associates with stalled 70S ribosomes.</text>
</comment>
<comment type="disruption phenotype">
    <text evidence="2">May not be essential, 1 disruption mutant has been isolated.</text>
</comment>
<comment type="similarity">
    <text evidence="1">Belongs to the SmpB family.</text>
</comment>
<evidence type="ECO:0000255" key="1">
    <source>
        <dbReference type="HAMAP-Rule" id="MF_00023"/>
    </source>
</evidence>
<evidence type="ECO:0000269" key="2">
    <source>
    </source>
</evidence>
<reference key="1">
    <citation type="journal article" date="1996" name="Nucleic Acids Res.">
        <title>Complete sequence analysis of the genome of the bacterium Mycoplasma pneumoniae.</title>
        <authorList>
            <person name="Himmelreich R."/>
            <person name="Hilbert H."/>
            <person name="Plagens H."/>
            <person name="Pirkl E."/>
            <person name="Li B.-C."/>
            <person name="Herrmann R."/>
        </authorList>
    </citation>
    <scope>NUCLEOTIDE SEQUENCE [LARGE SCALE GENOMIC DNA]</scope>
    <source>
        <strain>ATCC 29342 / M129 / Subtype 1</strain>
    </source>
</reference>
<reference key="2">
    <citation type="journal article" date="1999" name="Science">
        <title>Global transposon mutagenesis and a minimal Mycoplasma genome.</title>
        <authorList>
            <person name="Hutchison C.A."/>
            <person name="Peterson S.N."/>
            <person name="Gill S.R."/>
            <person name="Cline R.T."/>
            <person name="White O."/>
            <person name="Fraser C.M."/>
            <person name="Smith H.O."/>
            <person name="Venter J.C."/>
        </authorList>
    </citation>
    <scope>DISRUPTION PHENOTYPE</scope>
    <source>
        <strain>ATCC 29342 / M129 / Subtype 1</strain>
    </source>
</reference>
<organism>
    <name type="scientific">Mycoplasma pneumoniae (strain ATCC 29342 / M129 / Subtype 1)</name>
    <name type="common">Mycoplasmoides pneumoniae</name>
    <dbReference type="NCBI Taxonomy" id="272634"/>
    <lineage>
        <taxon>Bacteria</taxon>
        <taxon>Bacillati</taxon>
        <taxon>Mycoplasmatota</taxon>
        <taxon>Mycoplasmoidales</taxon>
        <taxon>Mycoplasmoidaceae</taxon>
        <taxon>Mycoplasmoides</taxon>
    </lineage>
</organism>
<sequence>MRVLVNNPRAQYDYYLLTGYCAGLVLKGSEVKSLALGQGSLKEAYVFIDKHEVYIKDFSISPYAFSGEFNHPFKRVKKLLLNRNEIKQITARQKQEGLSIIPLKVFFKNGKIKMEIWLAKPKKKFDKREAIKSKTIQRELRQQYGSP</sequence>
<feature type="chain" id="PRO_0000102989" description="SsrA-binding protein">
    <location>
        <begin position="1"/>
        <end position="147"/>
    </location>
</feature>
<proteinExistence type="inferred from homology"/>